<evidence type="ECO:0000250" key="1">
    <source>
        <dbReference type="UniProtKB" id="P62495"/>
    </source>
</evidence>
<evidence type="ECO:0000269" key="2">
    <source>
    </source>
</evidence>
<evidence type="ECO:0000269" key="3">
    <source>
    </source>
</evidence>
<evidence type="ECO:0000305" key="4"/>
<evidence type="ECO:0000305" key="5">
    <source>
    </source>
</evidence>
<evidence type="ECO:0000305" key="6">
    <source>
    </source>
</evidence>
<evidence type="ECO:0007829" key="7">
    <source>
        <dbReference type="PDB" id="5DMR"/>
    </source>
</evidence>
<protein>
    <recommendedName>
        <fullName>Eukaryotic peptide chain release factor subunit 1</fullName>
        <shortName>Eukaryotic release factor 1</shortName>
        <shortName>eRF1</shortName>
    </recommendedName>
</protein>
<comment type="function">
    <text evidence="1">Component of the eRF1-eRF3-GTP ternary complex, a ternary complex that mediates translation termination in response to the termination codons. The eRF1-eRF3-GTP complex binds to a stop codon in the ribosomal A-site. ETF1/ERF1 is responsible for stop codon recognition and inducing hydrolysis of peptidyl-tRNA. Following GTP hydrolysis, eRF3 (GSPT1/ERF3A or GSPT2/ERF3B) dissociates, permitting ETF1/eRF1 to accommodate fully in the A-site, followed by hydrolysis of peptidyl-tRNA. Component of the transient SURF complex which recruits UPF1 to stalled ribosomes in the context of nonsense-mediated decay (NMD) of mRNAs containing premature stop codons. Required for SHFL-mediated translation termination which inhibits programmed ribosomal frameshifting (-1PRF) of mRNA from viruses and cellular genes.</text>
</comment>
<comment type="subunit">
    <text evidence="1">Component of the eRF1-eRF3-GTP ternary complex, composed of ETF1/ERF1 and eRF3 (GSPT1/ERF3A or GSPT2/ERF3B) and GTP. Component of the transient SURF (SMG1-UPF1-eRF1-eRF3) complex. Interacts with JMJD4. The ETF1-GSPT1 complex interacts with JMJD4.</text>
</comment>
<comment type="subunit">
    <text evidence="2">(Microbial infection) Interacts with Moloney murine leukemia virus (MoLV) reverse transcriptase/Ribonuclease H p80 (via RT and RNase domains); this interaction is essential for translational readthrough of amber codon between viral gag and pol genes. Interacts with MoLV Gag-Pol precursor.</text>
</comment>
<comment type="subcellular location">
    <subcellularLocation>
        <location evidence="1">Cytoplasm</location>
    </subcellularLocation>
</comment>
<comment type="PTM">
    <text evidence="6">Hydroxylation at Lys-63 by JMJD4 promotes its translational termination efficiency.</text>
</comment>
<comment type="PTM">
    <text evidence="5">Methylated at Gln-185 by N6AMT1.</text>
</comment>
<comment type="PTM">
    <text evidence="1">Ubiquitinated at Lys-279 via 'Lys-6'-linked polyubiquitin chains by RNF14 and RNF25 in response to ribosome collisions (ribosome stalling), leading to its degradation by the proteasome and rescue of stalled ribosomes.</text>
</comment>
<comment type="similarity">
    <text evidence="4">Belongs to the eukaryotic release factor 1 family.</text>
</comment>
<accession>Q8BWY3</accession>
<accession>Q3TPZ6</accession>
<accession>Q91VH9</accession>
<feature type="initiator methionine" description="Removed" evidence="1">
    <location>
        <position position="1"/>
    </location>
</feature>
<feature type="chain" id="PRO_0000143140" description="Eukaryotic peptide chain release factor subunit 1">
    <location>
        <begin position="2"/>
        <end position="437"/>
    </location>
</feature>
<feature type="short sequence motif" description="NIKS motif; plays an important role in translational termination" evidence="1">
    <location>
        <begin position="61"/>
        <end position="64"/>
    </location>
</feature>
<feature type="modified residue" description="N-acetylalanine" evidence="1">
    <location>
        <position position="2"/>
    </location>
</feature>
<feature type="modified residue" description="4-hydroxylysine" evidence="3">
    <location>
        <position position="63"/>
    </location>
</feature>
<feature type="modified residue" description="N5-methylglutamine" evidence="5">
    <location>
        <position position="185"/>
    </location>
</feature>
<feature type="modified residue" description="Phosphothreonine" evidence="1">
    <location>
        <position position="347"/>
    </location>
</feature>
<feature type="cross-link" description="Glycyl lysine isopeptide (Lys-Gly) (interchain with G-Cter in SUMO2)" evidence="1">
    <location>
        <position position="87"/>
    </location>
</feature>
<feature type="cross-link" description="Glycyl lysine isopeptide (Lys-Gly) (interchain with G-Cter in ubiquitin)" evidence="1">
    <location>
        <position position="279"/>
    </location>
</feature>
<feature type="cross-link" description="Glycyl lysine isopeptide (Lys-Gly) (interchain with G-Cter in SUMO2)" evidence="1">
    <location>
        <position position="404"/>
    </location>
</feature>
<feature type="sequence conflict" description="In Ref. 2; AAH13717." evidence="4" ref="2">
    <original>P</original>
    <variation>Q</variation>
    <location>
        <position position="40"/>
    </location>
</feature>
<feature type="sequence conflict" description="In Ref. 1; BAC33839." evidence="4" ref="1">
    <original>E</original>
    <variation>K</variation>
    <location>
        <position position="207"/>
    </location>
</feature>
<feature type="helix" evidence="7">
    <location>
        <begin position="283"/>
        <end position="295"/>
    </location>
</feature>
<feature type="strand" evidence="7">
    <location>
        <begin position="301"/>
        <end position="304"/>
    </location>
</feature>
<feature type="helix" evidence="7">
    <location>
        <begin position="305"/>
        <end position="313"/>
    </location>
</feature>
<feature type="strand" evidence="7">
    <location>
        <begin position="317"/>
        <end position="323"/>
    </location>
</feature>
<feature type="strand" evidence="7">
    <location>
        <begin position="329"/>
        <end position="334"/>
    </location>
</feature>
<feature type="strand" evidence="7">
    <location>
        <begin position="336"/>
        <end position="339"/>
    </location>
</feature>
<feature type="strand" evidence="7">
    <location>
        <begin position="341"/>
        <end position="346"/>
    </location>
</feature>
<feature type="strand" evidence="7">
    <location>
        <begin position="368"/>
        <end position="373"/>
    </location>
</feature>
<feature type="helix" evidence="7">
    <location>
        <begin position="374"/>
        <end position="381"/>
    </location>
</feature>
<feature type="helix" evidence="7">
    <location>
        <begin position="382"/>
        <end position="384"/>
    </location>
</feature>
<feature type="strand" evidence="7">
    <location>
        <begin position="388"/>
        <end position="392"/>
    </location>
</feature>
<feature type="strand" evidence="7">
    <location>
        <begin position="394"/>
        <end position="396"/>
    </location>
</feature>
<feature type="helix" evidence="7">
    <location>
        <begin position="397"/>
        <end position="406"/>
    </location>
</feature>
<feature type="strand" evidence="7">
    <location>
        <begin position="409"/>
        <end position="415"/>
    </location>
</feature>
<reference key="1">
    <citation type="journal article" date="2005" name="Science">
        <title>The transcriptional landscape of the mammalian genome.</title>
        <authorList>
            <person name="Carninci P."/>
            <person name="Kasukawa T."/>
            <person name="Katayama S."/>
            <person name="Gough J."/>
            <person name="Frith M.C."/>
            <person name="Maeda N."/>
            <person name="Oyama R."/>
            <person name="Ravasi T."/>
            <person name="Lenhard B."/>
            <person name="Wells C."/>
            <person name="Kodzius R."/>
            <person name="Shimokawa K."/>
            <person name="Bajic V.B."/>
            <person name="Brenner S.E."/>
            <person name="Batalov S."/>
            <person name="Forrest A.R."/>
            <person name="Zavolan M."/>
            <person name="Davis M.J."/>
            <person name="Wilming L.G."/>
            <person name="Aidinis V."/>
            <person name="Allen J.E."/>
            <person name="Ambesi-Impiombato A."/>
            <person name="Apweiler R."/>
            <person name="Aturaliya R.N."/>
            <person name="Bailey T.L."/>
            <person name="Bansal M."/>
            <person name="Baxter L."/>
            <person name="Beisel K.W."/>
            <person name="Bersano T."/>
            <person name="Bono H."/>
            <person name="Chalk A.M."/>
            <person name="Chiu K.P."/>
            <person name="Choudhary V."/>
            <person name="Christoffels A."/>
            <person name="Clutterbuck D.R."/>
            <person name="Crowe M.L."/>
            <person name="Dalla E."/>
            <person name="Dalrymple B.P."/>
            <person name="de Bono B."/>
            <person name="Della Gatta G."/>
            <person name="di Bernardo D."/>
            <person name="Down T."/>
            <person name="Engstrom P."/>
            <person name="Fagiolini M."/>
            <person name="Faulkner G."/>
            <person name="Fletcher C.F."/>
            <person name="Fukushima T."/>
            <person name="Furuno M."/>
            <person name="Futaki S."/>
            <person name="Gariboldi M."/>
            <person name="Georgii-Hemming P."/>
            <person name="Gingeras T.R."/>
            <person name="Gojobori T."/>
            <person name="Green R.E."/>
            <person name="Gustincich S."/>
            <person name="Harbers M."/>
            <person name="Hayashi Y."/>
            <person name="Hensch T.K."/>
            <person name="Hirokawa N."/>
            <person name="Hill D."/>
            <person name="Huminiecki L."/>
            <person name="Iacono M."/>
            <person name="Ikeo K."/>
            <person name="Iwama A."/>
            <person name="Ishikawa T."/>
            <person name="Jakt M."/>
            <person name="Kanapin A."/>
            <person name="Katoh M."/>
            <person name="Kawasawa Y."/>
            <person name="Kelso J."/>
            <person name="Kitamura H."/>
            <person name="Kitano H."/>
            <person name="Kollias G."/>
            <person name="Krishnan S.P."/>
            <person name="Kruger A."/>
            <person name="Kummerfeld S.K."/>
            <person name="Kurochkin I.V."/>
            <person name="Lareau L.F."/>
            <person name="Lazarevic D."/>
            <person name="Lipovich L."/>
            <person name="Liu J."/>
            <person name="Liuni S."/>
            <person name="McWilliam S."/>
            <person name="Madan Babu M."/>
            <person name="Madera M."/>
            <person name="Marchionni L."/>
            <person name="Matsuda H."/>
            <person name="Matsuzawa S."/>
            <person name="Miki H."/>
            <person name="Mignone F."/>
            <person name="Miyake S."/>
            <person name="Morris K."/>
            <person name="Mottagui-Tabar S."/>
            <person name="Mulder N."/>
            <person name="Nakano N."/>
            <person name="Nakauchi H."/>
            <person name="Ng P."/>
            <person name="Nilsson R."/>
            <person name="Nishiguchi S."/>
            <person name="Nishikawa S."/>
            <person name="Nori F."/>
            <person name="Ohara O."/>
            <person name="Okazaki Y."/>
            <person name="Orlando V."/>
            <person name="Pang K.C."/>
            <person name="Pavan W.J."/>
            <person name="Pavesi G."/>
            <person name="Pesole G."/>
            <person name="Petrovsky N."/>
            <person name="Piazza S."/>
            <person name="Reed J."/>
            <person name="Reid J.F."/>
            <person name="Ring B.Z."/>
            <person name="Ringwald M."/>
            <person name="Rost B."/>
            <person name="Ruan Y."/>
            <person name="Salzberg S.L."/>
            <person name="Sandelin A."/>
            <person name="Schneider C."/>
            <person name="Schoenbach C."/>
            <person name="Sekiguchi K."/>
            <person name="Semple C.A."/>
            <person name="Seno S."/>
            <person name="Sessa L."/>
            <person name="Sheng Y."/>
            <person name="Shibata Y."/>
            <person name="Shimada H."/>
            <person name="Shimada K."/>
            <person name="Silva D."/>
            <person name="Sinclair B."/>
            <person name="Sperling S."/>
            <person name="Stupka E."/>
            <person name="Sugiura K."/>
            <person name="Sultana R."/>
            <person name="Takenaka Y."/>
            <person name="Taki K."/>
            <person name="Tammoja K."/>
            <person name="Tan S.L."/>
            <person name="Tang S."/>
            <person name="Taylor M.S."/>
            <person name="Tegner J."/>
            <person name="Teichmann S.A."/>
            <person name="Ueda H.R."/>
            <person name="van Nimwegen E."/>
            <person name="Verardo R."/>
            <person name="Wei C.L."/>
            <person name="Yagi K."/>
            <person name="Yamanishi H."/>
            <person name="Zabarovsky E."/>
            <person name="Zhu S."/>
            <person name="Zimmer A."/>
            <person name="Hide W."/>
            <person name="Bult C."/>
            <person name="Grimmond S.M."/>
            <person name="Teasdale R.D."/>
            <person name="Liu E.T."/>
            <person name="Brusic V."/>
            <person name="Quackenbush J."/>
            <person name="Wahlestedt C."/>
            <person name="Mattick J.S."/>
            <person name="Hume D.A."/>
            <person name="Kai C."/>
            <person name="Sasaki D."/>
            <person name="Tomaru Y."/>
            <person name="Fukuda S."/>
            <person name="Kanamori-Katayama M."/>
            <person name="Suzuki M."/>
            <person name="Aoki J."/>
            <person name="Arakawa T."/>
            <person name="Iida J."/>
            <person name="Imamura K."/>
            <person name="Itoh M."/>
            <person name="Kato T."/>
            <person name="Kawaji H."/>
            <person name="Kawagashira N."/>
            <person name="Kawashima T."/>
            <person name="Kojima M."/>
            <person name="Kondo S."/>
            <person name="Konno H."/>
            <person name="Nakano K."/>
            <person name="Ninomiya N."/>
            <person name="Nishio T."/>
            <person name="Okada M."/>
            <person name="Plessy C."/>
            <person name="Shibata K."/>
            <person name="Shiraki T."/>
            <person name="Suzuki S."/>
            <person name="Tagami M."/>
            <person name="Waki K."/>
            <person name="Watahiki A."/>
            <person name="Okamura-Oho Y."/>
            <person name="Suzuki H."/>
            <person name="Kawai J."/>
            <person name="Hayashizaki Y."/>
        </authorList>
    </citation>
    <scope>NUCLEOTIDE SEQUENCE [LARGE SCALE MRNA]</scope>
    <source>
        <strain>C57BL/6J</strain>
        <tissue>Spinal cord</tissue>
    </source>
</reference>
<reference key="2">
    <citation type="journal article" date="2004" name="Genome Res.">
        <title>The status, quality, and expansion of the NIH full-length cDNA project: the Mammalian Gene Collection (MGC).</title>
        <authorList>
            <consortium name="The MGC Project Team"/>
        </authorList>
    </citation>
    <scope>NUCLEOTIDE SEQUENCE [LARGE SCALE MRNA]</scope>
    <source>
        <tissue>Mammary tumor</tissue>
    </source>
</reference>
<reference key="3">
    <citation type="journal article" date="2003" name="Cell">
        <title>Reverse transcriptase of Moloney murine leukemia virus binds to eukaryotic release factor 1 to modulate suppression of translational termination.</title>
        <authorList>
            <person name="Orlova M."/>
            <person name="Yueh A."/>
            <person name="Leung J."/>
            <person name="Goff S.P."/>
        </authorList>
    </citation>
    <scope>INTERACTION WITH MOLONEY MURINE LEUKEMIA VIRUS REVERSE TRANSCRIPTASE/RIBONUCLEASE H P80 AND GAG-POL POLYPROTEIN (MICROBIAL INFECTION)</scope>
</reference>
<reference key="4">
    <citation type="journal article" date="2010" name="Cell">
        <title>A tissue-specific atlas of mouse protein phosphorylation and expression.</title>
        <authorList>
            <person name="Huttlin E.L."/>
            <person name="Jedrychowski M.P."/>
            <person name="Elias J.E."/>
            <person name="Goswami T."/>
            <person name="Rad R."/>
            <person name="Beausoleil S.A."/>
            <person name="Villen J."/>
            <person name="Haas W."/>
            <person name="Sowa M.E."/>
            <person name="Gygi S.P."/>
        </authorList>
    </citation>
    <scope>IDENTIFICATION BY MASS SPECTROMETRY [LARGE SCALE ANALYSIS]</scope>
    <source>
        <tissue>Brain</tissue>
        <tissue>Brown adipose tissue</tissue>
        <tissue>Heart</tissue>
        <tissue>Kidney</tissue>
        <tissue>Liver</tissue>
        <tissue>Lung</tissue>
        <tissue>Pancreas</tissue>
        <tissue>Spleen</tissue>
        <tissue>Testis</tissue>
    </source>
</reference>
<reference key="5">
    <citation type="journal article" date="2010" name="Mol. Cell. Biol.">
        <title>Deficiency in a glutamine-specific methyltransferase for release factor causes mouse embryonic lethality.</title>
        <authorList>
            <person name="Liu P."/>
            <person name="Nie S."/>
            <person name="Li B."/>
            <person name="Yang Z.Q."/>
            <person name="Xu Z.M."/>
            <person name="Fei J."/>
            <person name="Lin C."/>
            <person name="Zeng R."/>
            <person name="Xu G.L."/>
        </authorList>
    </citation>
    <scope>METHYLATION AT GLN-185</scope>
</reference>
<reference key="6">
    <citation type="journal article" date="2014" name="Mol. Cell">
        <title>Optimal translational termination requires C4 lysyl hydroxylation of eRF1.</title>
        <authorList>
            <person name="Feng T."/>
            <person name="Yamamoto A."/>
            <person name="Wilkins S.E."/>
            <person name="Sokolova E."/>
            <person name="Yates L.A."/>
            <person name="Muenzel M."/>
            <person name="Singh P."/>
            <person name="Hopkinson R.J."/>
            <person name="Fischer R."/>
            <person name="Cockman M.E."/>
            <person name="Shelley J."/>
            <person name="Trudgian D.C."/>
            <person name="Schoedel J."/>
            <person name="McCullagh J.S."/>
            <person name="Ge W."/>
            <person name="Kessler B.M."/>
            <person name="Gilbert R.J."/>
            <person name="Frolova L.Y."/>
            <person name="Alkalaeva E."/>
            <person name="Ratcliffe P.J."/>
            <person name="Schofield C.J."/>
            <person name="Coleman M.L."/>
        </authorList>
    </citation>
    <scope>HYDROXYLATION AT LYS-63</scope>
</reference>
<dbReference type="EMBL" id="AK049607">
    <property type="protein sequence ID" value="BAC33839.1"/>
    <property type="molecule type" value="mRNA"/>
</dbReference>
<dbReference type="EMBL" id="AK164020">
    <property type="protein sequence ID" value="BAE37589.1"/>
    <property type="molecule type" value="mRNA"/>
</dbReference>
<dbReference type="EMBL" id="BC013717">
    <property type="protein sequence ID" value="AAH13717.1"/>
    <property type="molecule type" value="mRNA"/>
</dbReference>
<dbReference type="CCDS" id="CCDS29137.1"/>
<dbReference type="RefSeq" id="NP_659115.3">
    <property type="nucleotide sequence ID" value="NM_144866.3"/>
</dbReference>
<dbReference type="PDB" id="5DMQ">
    <property type="method" value="X-ray"/>
    <property type="resolution" value="4.00 A"/>
    <property type="chains" value="B=1-437"/>
</dbReference>
<dbReference type="PDB" id="5DMR">
    <property type="method" value="X-ray"/>
    <property type="resolution" value="2.80 A"/>
    <property type="chains" value="B=276-437"/>
</dbReference>
<dbReference type="PDBsum" id="5DMQ"/>
<dbReference type="PDBsum" id="5DMR"/>
<dbReference type="SMR" id="Q8BWY3"/>
<dbReference type="BioGRID" id="230388">
    <property type="interactions" value="11"/>
</dbReference>
<dbReference type="ComplexPortal" id="CPX-670">
    <property type="entry name" value="ERF1-ERF3 translation release factor complex, Gspt1 variant"/>
</dbReference>
<dbReference type="ComplexPortal" id="CPX-8924">
    <property type="entry name" value="ERF1-ERF3 translation release factor complex, Gspt2 variant"/>
</dbReference>
<dbReference type="FunCoup" id="Q8BWY3">
    <property type="interactions" value="4256"/>
</dbReference>
<dbReference type="IntAct" id="Q8BWY3">
    <property type="interactions" value="2"/>
</dbReference>
<dbReference type="STRING" id="10090.ENSMUSP00000025218"/>
<dbReference type="GlyGen" id="Q8BWY3">
    <property type="glycosylation" value="1 site, 1 O-linked glycan (1 site)"/>
</dbReference>
<dbReference type="iPTMnet" id="Q8BWY3"/>
<dbReference type="PhosphoSitePlus" id="Q8BWY3"/>
<dbReference type="SwissPalm" id="Q8BWY3"/>
<dbReference type="jPOST" id="Q8BWY3"/>
<dbReference type="PaxDb" id="10090-ENSMUSP00000025218"/>
<dbReference type="PeptideAtlas" id="Q8BWY3"/>
<dbReference type="ProteomicsDB" id="275882"/>
<dbReference type="Pumba" id="Q8BWY3"/>
<dbReference type="Antibodypedia" id="26674">
    <property type="antibodies" value="203 antibodies from 28 providers"/>
</dbReference>
<dbReference type="DNASU" id="225363"/>
<dbReference type="Ensembl" id="ENSMUST00000025218.8">
    <property type="protein sequence ID" value="ENSMUSP00000025218.8"/>
    <property type="gene ID" value="ENSMUSG00000024360.9"/>
</dbReference>
<dbReference type="GeneID" id="225363"/>
<dbReference type="KEGG" id="mmu:225363"/>
<dbReference type="UCSC" id="uc008elu.1">
    <property type="organism name" value="mouse"/>
</dbReference>
<dbReference type="AGR" id="MGI:2385071"/>
<dbReference type="CTD" id="2107"/>
<dbReference type="MGI" id="MGI:2385071">
    <property type="gene designation" value="Etf1"/>
</dbReference>
<dbReference type="VEuPathDB" id="HostDB:ENSMUSG00000024360"/>
<dbReference type="eggNOG" id="KOG0688">
    <property type="taxonomic scope" value="Eukaryota"/>
</dbReference>
<dbReference type="GeneTree" id="ENSGT00390000009004"/>
<dbReference type="HOGENOM" id="CLU_035759_2_1_1"/>
<dbReference type="InParanoid" id="Q8BWY3"/>
<dbReference type="OMA" id="RCNGSEE"/>
<dbReference type="OrthoDB" id="10254527at2759"/>
<dbReference type="PhylomeDB" id="Q8BWY3"/>
<dbReference type="TreeFam" id="TF105672"/>
<dbReference type="Reactome" id="R-MMU-72764">
    <property type="pathway name" value="Eukaryotic Translation Termination"/>
</dbReference>
<dbReference type="Reactome" id="R-MMU-9629569">
    <property type="pathway name" value="Protein hydroxylation"/>
</dbReference>
<dbReference type="Reactome" id="R-MMU-975956">
    <property type="pathway name" value="Nonsense Mediated Decay (NMD) independent of the Exon Junction Complex (EJC)"/>
</dbReference>
<dbReference type="Reactome" id="R-MMU-975957">
    <property type="pathway name" value="Nonsense Mediated Decay (NMD) enhanced by the Exon Junction Complex (EJC)"/>
</dbReference>
<dbReference type="BioGRID-ORCS" id="225363">
    <property type="hits" value="30 hits in 77 CRISPR screens"/>
</dbReference>
<dbReference type="ChiTaRS" id="Etf1">
    <property type="organism name" value="mouse"/>
</dbReference>
<dbReference type="PRO" id="PR:Q8BWY3"/>
<dbReference type="Proteomes" id="UP000000589">
    <property type="component" value="Chromosome 18"/>
</dbReference>
<dbReference type="RNAct" id="Q8BWY3">
    <property type="molecule type" value="protein"/>
</dbReference>
<dbReference type="Bgee" id="ENSMUSG00000024360">
    <property type="expression patterns" value="Expressed in epiblast (generic) and 268 other cell types or tissues"/>
</dbReference>
<dbReference type="GO" id="GO:0005737">
    <property type="term" value="C:cytoplasm"/>
    <property type="evidence" value="ECO:0000250"/>
    <property type="project" value="UniProtKB"/>
</dbReference>
<dbReference type="GO" id="GO:0022626">
    <property type="term" value="C:cytosolic ribosome"/>
    <property type="evidence" value="ECO:0007669"/>
    <property type="project" value="Ensembl"/>
</dbReference>
<dbReference type="GO" id="GO:0018444">
    <property type="term" value="C:translation release factor complex"/>
    <property type="evidence" value="ECO:0000266"/>
    <property type="project" value="ComplexPortal"/>
</dbReference>
<dbReference type="GO" id="GO:0004045">
    <property type="term" value="F:peptidyl-tRNA hydrolase activity"/>
    <property type="evidence" value="ECO:0007669"/>
    <property type="project" value="Ensembl"/>
</dbReference>
<dbReference type="GO" id="GO:1990825">
    <property type="term" value="F:sequence-specific mRNA binding"/>
    <property type="evidence" value="ECO:0007669"/>
    <property type="project" value="Ensembl"/>
</dbReference>
<dbReference type="GO" id="GO:0003747">
    <property type="term" value="F:translation release factor activity"/>
    <property type="evidence" value="ECO:0000266"/>
    <property type="project" value="MGI"/>
</dbReference>
<dbReference type="GO" id="GO:0008079">
    <property type="term" value="F:translation termination factor activity"/>
    <property type="evidence" value="ECO:0000250"/>
    <property type="project" value="UniProtKB"/>
</dbReference>
<dbReference type="GO" id="GO:0000184">
    <property type="term" value="P:nuclear-transcribed mRNA catabolic process, nonsense-mediated decay"/>
    <property type="evidence" value="ECO:0007669"/>
    <property type="project" value="UniProtKB-KW"/>
</dbReference>
<dbReference type="GO" id="GO:0006449">
    <property type="term" value="P:regulation of translational termination"/>
    <property type="evidence" value="ECO:0007669"/>
    <property type="project" value="Ensembl"/>
</dbReference>
<dbReference type="GO" id="GO:0006415">
    <property type="term" value="P:translational termination"/>
    <property type="evidence" value="ECO:0000266"/>
    <property type="project" value="MGI"/>
</dbReference>
<dbReference type="FunFam" id="3.30.1330.30:FF:000009">
    <property type="entry name" value="Eukaryotic peptide chain release factor subunit 1"/>
    <property type="match status" value="1"/>
</dbReference>
<dbReference type="FunFam" id="3.30.420.60:FF:000001">
    <property type="entry name" value="Eukaryotic peptide chain release factor subunit 1"/>
    <property type="match status" value="1"/>
</dbReference>
<dbReference type="FunFam" id="3.30.960.10:FF:000001">
    <property type="entry name" value="Eukaryotic peptide chain release factor subunit 1"/>
    <property type="match status" value="1"/>
</dbReference>
<dbReference type="Gene3D" id="3.30.1330.30">
    <property type="match status" value="1"/>
</dbReference>
<dbReference type="Gene3D" id="3.30.960.10">
    <property type="entry name" value="eRF1 domain 1"/>
    <property type="match status" value="1"/>
</dbReference>
<dbReference type="Gene3D" id="3.30.420.60">
    <property type="entry name" value="eRF1 domain 2"/>
    <property type="match status" value="1"/>
</dbReference>
<dbReference type="InterPro" id="IPR042226">
    <property type="entry name" value="eFR1_2_sf"/>
</dbReference>
<dbReference type="InterPro" id="IPR005140">
    <property type="entry name" value="eRF1_1_Pelota"/>
</dbReference>
<dbReference type="InterPro" id="IPR024049">
    <property type="entry name" value="eRF1_1_sf"/>
</dbReference>
<dbReference type="InterPro" id="IPR005141">
    <property type="entry name" value="eRF1_2"/>
</dbReference>
<dbReference type="InterPro" id="IPR005142">
    <property type="entry name" value="eRF1_3"/>
</dbReference>
<dbReference type="InterPro" id="IPR004403">
    <property type="entry name" value="Peptide_chain-rel_eRF1/aRF1"/>
</dbReference>
<dbReference type="InterPro" id="IPR029064">
    <property type="entry name" value="Ribosomal_eL30-like_sf"/>
</dbReference>
<dbReference type="NCBIfam" id="TIGR03676">
    <property type="entry name" value="aRF1_eRF1"/>
    <property type="match status" value="1"/>
</dbReference>
<dbReference type="PANTHER" id="PTHR10113">
    <property type="entry name" value="PEPTIDE CHAIN RELEASE FACTOR SUBUNIT 1"/>
    <property type="match status" value="1"/>
</dbReference>
<dbReference type="Pfam" id="PF03463">
    <property type="entry name" value="eRF1_1"/>
    <property type="match status" value="1"/>
</dbReference>
<dbReference type="Pfam" id="PF03464">
    <property type="entry name" value="eRF1_2"/>
    <property type="match status" value="1"/>
</dbReference>
<dbReference type="Pfam" id="PF03465">
    <property type="entry name" value="eRF1_3"/>
    <property type="match status" value="1"/>
</dbReference>
<dbReference type="SMART" id="SM01194">
    <property type="entry name" value="eRF1_1"/>
    <property type="match status" value="1"/>
</dbReference>
<dbReference type="SUPFAM" id="SSF55315">
    <property type="entry name" value="L30e-like"/>
    <property type="match status" value="1"/>
</dbReference>
<dbReference type="SUPFAM" id="SSF55481">
    <property type="entry name" value="N-terminal domain of eukaryotic peptide chain release factor subunit 1, ERF1"/>
    <property type="match status" value="1"/>
</dbReference>
<dbReference type="SUPFAM" id="SSF53137">
    <property type="entry name" value="Translational machinery components"/>
    <property type="match status" value="1"/>
</dbReference>
<proteinExistence type="evidence at protein level"/>
<sequence>MADDPSAADRNVEIWKIKKLIKSLEAARGNGTSMISLIIPPKDQISRVAKMLADEFGTASNIKSRVNRLSVLGAITSVQQRLKLYNKVPPNGLVVYCGTIVTEEGKEKKVNIDFEPFKPINTSLYLCDNKFHTEALTALLSDDSKFGFIVIDGSGALFGTLQGNTREVLHKFTVDLPKKHGRGGQSALRFARLRMEKRHNYVRKVAETAVQLFISGDKVNVAGLVLAGSADFKTELSQSDMFDQRLQSKVLKLVDISYGGENGFNQAIELSTEVLSNVKFIQEKKLIGRYFDEISQDTGKYCFGVEDTLKALEMGAVEILIVYENLDIMRYVLHCQGTEEEKILYLTPEQEKDKSHFTDKETGQEHELIESMPLLEWFANNYKKFGATLEIVTDKSQEGSQFVKGFGGIGGILRYRVDFQGMEYQGGDDEFFDLDDY</sequence>
<name>ERF1_MOUSE</name>
<gene>
    <name type="primary">Etf1</name>
</gene>
<keyword id="KW-0002">3D-structure</keyword>
<keyword id="KW-0007">Acetylation</keyword>
<keyword id="KW-0963">Cytoplasm</keyword>
<keyword id="KW-0945">Host-virus interaction</keyword>
<keyword id="KW-0379">Hydroxylation</keyword>
<keyword id="KW-1017">Isopeptide bond</keyword>
<keyword id="KW-0488">Methylation</keyword>
<keyword id="KW-0866">Nonsense-mediated mRNA decay</keyword>
<keyword id="KW-0597">Phosphoprotein</keyword>
<keyword id="KW-0648">Protein biosynthesis</keyword>
<keyword id="KW-1185">Reference proteome</keyword>
<keyword id="KW-0832">Ubl conjugation</keyword>
<organism>
    <name type="scientific">Mus musculus</name>
    <name type="common">Mouse</name>
    <dbReference type="NCBI Taxonomy" id="10090"/>
    <lineage>
        <taxon>Eukaryota</taxon>
        <taxon>Metazoa</taxon>
        <taxon>Chordata</taxon>
        <taxon>Craniata</taxon>
        <taxon>Vertebrata</taxon>
        <taxon>Euteleostomi</taxon>
        <taxon>Mammalia</taxon>
        <taxon>Eutheria</taxon>
        <taxon>Euarchontoglires</taxon>
        <taxon>Glires</taxon>
        <taxon>Rodentia</taxon>
        <taxon>Myomorpha</taxon>
        <taxon>Muroidea</taxon>
        <taxon>Muridae</taxon>
        <taxon>Murinae</taxon>
        <taxon>Mus</taxon>
        <taxon>Mus</taxon>
    </lineage>
</organism>